<comment type="function">
    <text evidence="1">The RuvA-RuvB-RuvC complex processes Holliday junction (HJ) DNA during genetic recombination and DNA repair, while the RuvA-RuvB complex plays an important role in the rescue of blocked DNA replication forks via replication fork reversal (RFR). RuvA specifically binds to HJ cruciform DNA, conferring on it an open structure. The RuvB hexamer acts as an ATP-dependent pump, pulling dsDNA into and through the RuvAB complex. RuvB forms 2 homohexamers on either side of HJ DNA bound by 1 or 2 RuvA tetramers; 4 subunits per hexamer contact DNA at a time. Coordinated motions by a converter formed by DNA-disengaged RuvB subunits stimulates ATP hydrolysis and nucleotide exchange. Immobilization of the converter enables RuvB to convert the ATP-contained energy into a lever motion, pulling 2 nucleotides of DNA out of the RuvA tetramer per ATP hydrolyzed, thus driving DNA branch migration. The RuvB motors rotate together with the DNA substrate, which together with the progressing nucleotide cycle form the mechanistic basis for DNA recombination by continuous HJ branch migration. Branch migration allows RuvC to scan DNA until it finds its consensus sequence, where it cleaves and resolves cruciform DNA.</text>
</comment>
<comment type="catalytic activity">
    <reaction evidence="1">
        <text>ATP + H2O = ADP + phosphate + H(+)</text>
        <dbReference type="Rhea" id="RHEA:13065"/>
        <dbReference type="ChEBI" id="CHEBI:15377"/>
        <dbReference type="ChEBI" id="CHEBI:15378"/>
        <dbReference type="ChEBI" id="CHEBI:30616"/>
        <dbReference type="ChEBI" id="CHEBI:43474"/>
        <dbReference type="ChEBI" id="CHEBI:456216"/>
    </reaction>
</comment>
<comment type="subunit">
    <text evidence="1">Homohexamer. Forms an RuvA(8)-RuvB(12)-Holliday junction (HJ) complex. HJ DNA is sandwiched between 2 RuvA tetramers; dsDNA enters through RuvA and exits via RuvB. An RuvB hexamer assembles on each DNA strand where it exits the tetramer. Each RuvB hexamer is contacted by two RuvA subunits (via domain III) on 2 adjacent RuvB subunits; this complex drives branch migration. In the full resolvosome a probable DNA-RuvA(4)-RuvB(12)-RuvC(2) complex forms which resolves the HJ.</text>
</comment>
<comment type="subcellular location">
    <subcellularLocation>
        <location evidence="1">Cytoplasm</location>
    </subcellularLocation>
</comment>
<comment type="domain">
    <text evidence="1">Has 3 domains, the large (RuvB-L) and small ATPase (RuvB-S) domains and the C-terminal head (RuvB-H) domain. The head domain binds DNA, while the ATPase domains jointly bind ATP, ADP or are empty depending on the state of the subunit in the translocation cycle. During a single DNA translocation step the structure of each domain remains the same, but their relative positions change.</text>
</comment>
<comment type="similarity">
    <text evidence="1">Belongs to the RuvB family.</text>
</comment>
<keyword id="KW-0067">ATP-binding</keyword>
<keyword id="KW-0963">Cytoplasm</keyword>
<keyword id="KW-0227">DNA damage</keyword>
<keyword id="KW-0233">DNA recombination</keyword>
<keyword id="KW-0234">DNA repair</keyword>
<keyword id="KW-0238">DNA-binding</keyword>
<keyword id="KW-0378">Hydrolase</keyword>
<keyword id="KW-0547">Nucleotide-binding</keyword>
<keyword id="KW-1185">Reference proteome</keyword>
<sequence length="346" mass="37842">MTDDRIIGAGATREDDAADASIRPKRLADYLGQVPVREQMEIYIQAAKGRGDALDHVLIFGPPGLGKTTLSHVIANELGVALRVTSGPVIEKAGDLAALLTNLQPHDVLFIDEIHRLSPVVEEVLYPAMEDFQIDIMIGEGPAARSIKIDLPPFTLIGATTRAGLLTAPLRDRFGIVQRLEFYSVEELTRIVRRSASILGIDCTADGAGEIARRARGTPRIANRLLRRVRDYAQVKAGGHIDEPVAQAAMKMLKVDPEGFDELDRRLLKTMVDYFDGGPVGIESLAAALSEERGTLEDVVEPYLIQQGFLVRTARGRMATHKAYRHMGLKPKNPPQDLFAEVPDVG</sequence>
<organism>
    <name type="scientific">Stenotrophomonas maltophilia (strain K279a)</name>
    <dbReference type="NCBI Taxonomy" id="522373"/>
    <lineage>
        <taxon>Bacteria</taxon>
        <taxon>Pseudomonadati</taxon>
        <taxon>Pseudomonadota</taxon>
        <taxon>Gammaproteobacteria</taxon>
        <taxon>Lysobacterales</taxon>
        <taxon>Lysobacteraceae</taxon>
        <taxon>Stenotrophomonas</taxon>
        <taxon>Stenotrophomonas maltophilia group</taxon>
    </lineage>
</organism>
<accession>B2FRN4</accession>
<gene>
    <name evidence="1" type="primary">ruvB</name>
    <name type="ordered locus">Smlt3709</name>
</gene>
<reference key="1">
    <citation type="journal article" date="2008" name="Genome Biol.">
        <title>The complete genome, comparative and functional analysis of Stenotrophomonas maltophilia reveals an organism heavily shielded by drug resistance determinants.</title>
        <authorList>
            <person name="Crossman L.C."/>
            <person name="Gould V.C."/>
            <person name="Dow J.M."/>
            <person name="Vernikos G.S."/>
            <person name="Okazaki A."/>
            <person name="Sebaihia M."/>
            <person name="Saunders D."/>
            <person name="Arrowsmith C."/>
            <person name="Carver T."/>
            <person name="Peters N."/>
            <person name="Adlem E."/>
            <person name="Kerhornou A."/>
            <person name="Lord A."/>
            <person name="Murphy L."/>
            <person name="Seeger K."/>
            <person name="Squares R."/>
            <person name="Rutter S."/>
            <person name="Quail M.A."/>
            <person name="Rajandream M.A."/>
            <person name="Harris D."/>
            <person name="Churcher C."/>
            <person name="Bentley S.D."/>
            <person name="Parkhill J."/>
            <person name="Thomson N.R."/>
            <person name="Avison M.B."/>
        </authorList>
    </citation>
    <scope>NUCLEOTIDE SEQUENCE [LARGE SCALE GENOMIC DNA]</scope>
    <source>
        <strain>K279a</strain>
    </source>
</reference>
<feature type="chain" id="PRO_1000089682" description="Holliday junction branch migration complex subunit RuvB">
    <location>
        <begin position="1"/>
        <end position="346"/>
    </location>
</feature>
<feature type="region of interest" description="Large ATPase domain (RuvB-L)" evidence="1">
    <location>
        <begin position="2"/>
        <end position="183"/>
    </location>
</feature>
<feature type="region of interest" description="Small ATPAse domain (RuvB-S)" evidence="1">
    <location>
        <begin position="184"/>
        <end position="254"/>
    </location>
</feature>
<feature type="region of interest" description="Head domain (RuvB-H)" evidence="1">
    <location>
        <begin position="257"/>
        <end position="346"/>
    </location>
</feature>
<feature type="binding site" evidence="1">
    <location>
        <position position="22"/>
    </location>
    <ligand>
        <name>ATP</name>
        <dbReference type="ChEBI" id="CHEBI:30616"/>
    </ligand>
</feature>
<feature type="binding site" evidence="1">
    <location>
        <position position="23"/>
    </location>
    <ligand>
        <name>ATP</name>
        <dbReference type="ChEBI" id="CHEBI:30616"/>
    </ligand>
</feature>
<feature type="binding site" evidence="1">
    <location>
        <position position="64"/>
    </location>
    <ligand>
        <name>ATP</name>
        <dbReference type="ChEBI" id="CHEBI:30616"/>
    </ligand>
</feature>
<feature type="binding site" evidence="1">
    <location>
        <position position="67"/>
    </location>
    <ligand>
        <name>ATP</name>
        <dbReference type="ChEBI" id="CHEBI:30616"/>
    </ligand>
</feature>
<feature type="binding site" evidence="1">
    <location>
        <position position="68"/>
    </location>
    <ligand>
        <name>ATP</name>
        <dbReference type="ChEBI" id="CHEBI:30616"/>
    </ligand>
</feature>
<feature type="binding site" evidence="1">
    <location>
        <position position="68"/>
    </location>
    <ligand>
        <name>Mg(2+)</name>
        <dbReference type="ChEBI" id="CHEBI:18420"/>
    </ligand>
</feature>
<feature type="binding site" evidence="1">
    <location>
        <position position="69"/>
    </location>
    <ligand>
        <name>ATP</name>
        <dbReference type="ChEBI" id="CHEBI:30616"/>
    </ligand>
</feature>
<feature type="binding site" evidence="1">
    <location>
        <begin position="130"/>
        <end position="132"/>
    </location>
    <ligand>
        <name>ATP</name>
        <dbReference type="ChEBI" id="CHEBI:30616"/>
    </ligand>
</feature>
<feature type="binding site" evidence="1">
    <location>
        <position position="173"/>
    </location>
    <ligand>
        <name>ATP</name>
        <dbReference type="ChEBI" id="CHEBI:30616"/>
    </ligand>
</feature>
<feature type="binding site" evidence="1">
    <location>
        <position position="183"/>
    </location>
    <ligand>
        <name>ATP</name>
        <dbReference type="ChEBI" id="CHEBI:30616"/>
    </ligand>
</feature>
<feature type="binding site" evidence="1">
    <location>
        <position position="220"/>
    </location>
    <ligand>
        <name>ATP</name>
        <dbReference type="ChEBI" id="CHEBI:30616"/>
    </ligand>
</feature>
<feature type="binding site" evidence="1">
    <location>
        <position position="293"/>
    </location>
    <ligand>
        <name>DNA</name>
        <dbReference type="ChEBI" id="CHEBI:16991"/>
    </ligand>
</feature>
<feature type="binding site" evidence="1">
    <location>
        <position position="312"/>
    </location>
    <ligand>
        <name>DNA</name>
        <dbReference type="ChEBI" id="CHEBI:16991"/>
    </ligand>
</feature>
<feature type="binding site" evidence="1">
    <location>
        <position position="317"/>
    </location>
    <ligand>
        <name>DNA</name>
        <dbReference type="ChEBI" id="CHEBI:16991"/>
    </ligand>
</feature>
<evidence type="ECO:0000255" key="1">
    <source>
        <dbReference type="HAMAP-Rule" id="MF_00016"/>
    </source>
</evidence>
<protein>
    <recommendedName>
        <fullName evidence="1">Holliday junction branch migration complex subunit RuvB</fullName>
        <ecNumber evidence="1">3.6.4.-</ecNumber>
    </recommendedName>
</protein>
<dbReference type="EC" id="3.6.4.-" evidence="1"/>
<dbReference type="EMBL" id="AM743169">
    <property type="protein sequence ID" value="CAQ47124.1"/>
    <property type="molecule type" value="Genomic_DNA"/>
</dbReference>
<dbReference type="RefSeq" id="WP_005410754.1">
    <property type="nucleotide sequence ID" value="NC_010943.1"/>
</dbReference>
<dbReference type="SMR" id="B2FRN4"/>
<dbReference type="EnsemblBacteria" id="CAQ47124">
    <property type="protein sequence ID" value="CAQ47124"/>
    <property type="gene ID" value="Smlt3709"/>
</dbReference>
<dbReference type="GeneID" id="93834700"/>
<dbReference type="KEGG" id="sml:Smlt3709"/>
<dbReference type="eggNOG" id="COG2255">
    <property type="taxonomic scope" value="Bacteria"/>
</dbReference>
<dbReference type="HOGENOM" id="CLU_055599_1_0_6"/>
<dbReference type="Proteomes" id="UP000008840">
    <property type="component" value="Chromosome"/>
</dbReference>
<dbReference type="GO" id="GO:0005737">
    <property type="term" value="C:cytoplasm"/>
    <property type="evidence" value="ECO:0007669"/>
    <property type="project" value="UniProtKB-SubCell"/>
</dbReference>
<dbReference type="GO" id="GO:0048476">
    <property type="term" value="C:Holliday junction resolvase complex"/>
    <property type="evidence" value="ECO:0007669"/>
    <property type="project" value="UniProtKB-UniRule"/>
</dbReference>
<dbReference type="GO" id="GO:0005524">
    <property type="term" value="F:ATP binding"/>
    <property type="evidence" value="ECO:0007669"/>
    <property type="project" value="UniProtKB-UniRule"/>
</dbReference>
<dbReference type="GO" id="GO:0016887">
    <property type="term" value="F:ATP hydrolysis activity"/>
    <property type="evidence" value="ECO:0007669"/>
    <property type="project" value="InterPro"/>
</dbReference>
<dbReference type="GO" id="GO:0000400">
    <property type="term" value="F:four-way junction DNA binding"/>
    <property type="evidence" value="ECO:0007669"/>
    <property type="project" value="UniProtKB-UniRule"/>
</dbReference>
<dbReference type="GO" id="GO:0009378">
    <property type="term" value="F:four-way junction helicase activity"/>
    <property type="evidence" value="ECO:0007669"/>
    <property type="project" value="InterPro"/>
</dbReference>
<dbReference type="GO" id="GO:0006310">
    <property type="term" value="P:DNA recombination"/>
    <property type="evidence" value="ECO:0007669"/>
    <property type="project" value="UniProtKB-UniRule"/>
</dbReference>
<dbReference type="GO" id="GO:0006281">
    <property type="term" value="P:DNA repair"/>
    <property type="evidence" value="ECO:0007669"/>
    <property type="project" value="UniProtKB-UniRule"/>
</dbReference>
<dbReference type="CDD" id="cd00009">
    <property type="entry name" value="AAA"/>
    <property type="match status" value="1"/>
</dbReference>
<dbReference type="FunFam" id="3.40.50.300:FF:000073">
    <property type="entry name" value="Holliday junction ATP-dependent DNA helicase RuvB"/>
    <property type="match status" value="1"/>
</dbReference>
<dbReference type="Gene3D" id="1.10.8.60">
    <property type="match status" value="1"/>
</dbReference>
<dbReference type="Gene3D" id="3.40.50.300">
    <property type="entry name" value="P-loop containing nucleotide triphosphate hydrolases"/>
    <property type="match status" value="1"/>
</dbReference>
<dbReference type="Gene3D" id="1.10.10.10">
    <property type="entry name" value="Winged helix-like DNA-binding domain superfamily/Winged helix DNA-binding domain"/>
    <property type="match status" value="1"/>
</dbReference>
<dbReference type="HAMAP" id="MF_00016">
    <property type="entry name" value="DNA_HJ_migration_RuvB"/>
    <property type="match status" value="1"/>
</dbReference>
<dbReference type="InterPro" id="IPR003593">
    <property type="entry name" value="AAA+_ATPase"/>
</dbReference>
<dbReference type="InterPro" id="IPR041445">
    <property type="entry name" value="AAA_lid_4"/>
</dbReference>
<dbReference type="InterPro" id="IPR004605">
    <property type="entry name" value="DNA_helicase_Holl-junc_RuvB"/>
</dbReference>
<dbReference type="InterPro" id="IPR027417">
    <property type="entry name" value="P-loop_NTPase"/>
</dbReference>
<dbReference type="InterPro" id="IPR008824">
    <property type="entry name" value="RuvB-like_N"/>
</dbReference>
<dbReference type="InterPro" id="IPR008823">
    <property type="entry name" value="RuvB_C"/>
</dbReference>
<dbReference type="InterPro" id="IPR036388">
    <property type="entry name" value="WH-like_DNA-bd_sf"/>
</dbReference>
<dbReference type="InterPro" id="IPR036390">
    <property type="entry name" value="WH_DNA-bd_sf"/>
</dbReference>
<dbReference type="NCBIfam" id="NF000868">
    <property type="entry name" value="PRK00080.1"/>
    <property type="match status" value="1"/>
</dbReference>
<dbReference type="NCBIfam" id="TIGR00635">
    <property type="entry name" value="ruvB"/>
    <property type="match status" value="1"/>
</dbReference>
<dbReference type="PANTHER" id="PTHR42848">
    <property type="match status" value="1"/>
</dbReference>
<dbReference type="PANTHER" id="PTHR42848:SF1">
    <property type="entry name" value="HOLLIDAY JUNCTION BRANCH MIGRATION COMPLEX SUBUNIT RUVB"/>
    <property type="match status" value="1"/>
</dbReference>
<dbReference type="Pfam" id="PF17864">
    <property type="entry name" value="AAA_lid_4"/>
    <property type="match status" value="1"/>
</dbReference>
<dbReference type="Pfam" id="PF05491">
    <property type="entry name" value="RuvB_C"/>
    <property type="match status" value="1"/>
</dbReference>
<dbReference type="Pfam" id="PF05496">
    <property type="entry name" value="RuvB_N"/>
    <property type="match status" value="1"/>
</dbReference>
<dbReference type="SMART" id="SM00382">
    <property type="entry name" value="AAA"/>
    <property type="match status" value="1"/>
</dbReference>
<dbReference type="SUPFAM" id="SSF52540">
    <property type="entry name" value="P-loop containing nucleoside triphosphate hydrolases"/>
    <property type="match status" value="1"/>
</dbReference>
<dbReference type="SUPFAM" id="SSF46785">
    <property type="entry name" value="Winged helix' DNA-binding domain"/>
    <property type="match status" value="1"/>
</dbReference>
<proteinExistence type="inferred from homology"/>
<name>RUVB_STRMK</name>